<dbReference type="EC" id="6.3.2.-" evidence="1"/>
<dbReference type="EMBL" id="CP000951">
    <property type="protein sequence ID" value="ACA98689.1"/>
    <property type="molecule type" value="Genomic_DNA"/>
</dbReference>
<dbReference type="RefSeq" id="WP_012306313.1">
    <property type="nucleotide sequence ID" value="NZ_JAHHPU010000001.1"/>
</dbReference>
<dbReference type="SMR" id="B1XQE7"/>
<dbReference type="STRING" id="32049.SYNPCC7002_A0684"/>
<dbReference type="KEGG" id="syp:SYNPCC7002_A0684"/>
<dbReference type="eggNOG" id="COG0189">
    <property type="taxonomic scope" value="Bacteria"/>
</dbReference>
<dbReference type="HOGENOM" id="CLU_054353_0_1_3"/>
<dbReference type="Proteomes" id="UP000001688">
    <property type="component" value="Chromosome"/>
</dbReference>
<dbReference type="GO" id="GO:0005737">
    <property type="term" value="C:cytoplasm"/>
    <property type="evidence" value="ECO:0007669"/>
    <property type="project" value="TreeGrafter"/>
</dbReference>
<dbReference type="GO" id="GO:0005524">
    <property type="term" value="F:ATP binding"/>
    <property type="evidence" value="ECO:0007669"/>
    <property type="project" value="UniProtKB-UniRule"/>
</dbReference>
<dbReference type="GO" id="GO:0046872">
    <property type="term" value="F:metal ion binding"/>
    <property type="evidence" value="ECO:0007669"/>
    <property type="project" value="UniProtKB-KW"/>
</dbReference>
<dbReference type="GO" id="GO:0018169">
    <property type="term" value="F:ribosomal S6-glutamic acid ligase activity"/>
    <property type="evidence" value="ECO:0007669"/>
    <property type="project" value="TreeGrafter"/>
</dbReference>
<dbReference type="GO" id="GO:0036211">
    <property type="term" value="P:protein modification process"/>
    <property type="evidence" value="ECO:0007669"/>
    <property type="project" value="InterPro"/>
</dbReference>
<dbReference type="GO" id="GO:0009432">
    <property type="term" value="P:SOS response"/>
    <property type="evidence" value="ECO:0007669"/>
    <property type="project" value="TreeGrafter"/>
</dbReference>
<dbReference type="GO" id="GO:0006412">
    <property type="term" value="P:translation"/>
    <property type="evidence" value="ECO:0007669"/>
    <property type="project" value="UniProtKB-KW"/>
</dbReference>
<dbReference type="FunFam" id="3.40.50.20:FF:000004">
    <property type="entry name" value="Probable alpha-L-glutamate ligase"/>
    <property type="match status" value="1"/>
</dbReference>
<dbReference type="FunFam" id="3.30.1490.20:FF:000005">
    <property type="entry name" value="Probable alpha-L-glutamate ligase 1"/>
    <property type="match status" value="1"/>
</dbReference>
<dbReference type="FunFam" id="3.30.470.20:FF:000016">
    <property type="entry name" value="Ribosomal protein S6--L-glutamate ligase"/>
    <property type="match status" value="1"/>
</dbReference>
<dbReference type="Gene3D" id="3.40.50.20">
    <property type="match status" value="1"/>
</dbReference>
<dbReference type="Gene3D" id="3.30.1490.20">
    <property type="entry name" value="ATP-grasp fold, A domain"/>
    <property type="match status" value="1"/>
</dbReference>
<dbReference type="Gene3D" id="3.30.470.20">
    <property type="entry name" value="ATP-grasp fold, B domain"/>
    <property type="match status" value="1"/>
</dbReference>
<dbReference type="HAMAP" id="MF_01552">
    <property type="entry name" value="RimK"/>
    <property type="match status" value="1"/>
</dbReference>
<dbReference type="InterPro" id="IPR011761">
    <property type="entry name" value="ATP-grasp"/>
</dbReference>
<dbReference type="InterPro" id="IPR013651">
    <property type="entry name" value="ATP-grasp_RimK-type"/>
</dbReference>
<dbReference type="InterPro" id="IPR013815">
    <property type="entry name" value="ATP_grasp_subdomain_1"/>
</dbReference>
<dbReference type="InterPro" id="IPR023533">
    <property type="entry name" value="RimK"/>
</dbReference>
<dbReference type="InterPro" id="IPR041107">
    <property type="entry name" value="Rimk_N"/>
</dbReference>
<dbReference type="InterPro" id="IPR004666">
    <property type="entry name" value="Rp_bS6_RimK/Lys_biosynth_LsyX"/>
</dbReference>
<dbReference type="NCBIfam" id="NF007764">
    <property type="entry name" value="PRK10446.1"/>
    <property type="match status" value="1"/>
</dbReference>
<dbReference type="NCBIfam" id="TIGR00768">
    <property type="entry name" value="rimK_fam"/>
    <property type="match status" value="1"/>
</dbReference>
<dbReference type="PANTHER" id="PTHR21621:SF7">
    <property type="entry name" value="RIBOSOMAL PROTEIN BS6--L-GLUTAMATE LIGASE"/>
    <property type="match status" value="1"/>
</dbReference>
<dbReference type="PANTHER" id="PTHR21621">
    <property type="entry name" value="RIBOSOMAL PROTEIN S6 MODIFICATION PROTEIN"/>
    <property type="match status" value="1"/>
</dbReference>
<dbReference type="Pfam" id="PF08443">
    <property type="entry name" value="RimK"/>
    <property type="match status" value="1"/>
</dbReference>
<dbReference type="Pfam" id="PF18030">
    <property type="entry name" value="Rimk_N"/>
    <property type="match status" value="1"/>
</dbReference>
<dbReference type="SUPFAM" id="SSF56059">
    <property type="entry name" value="Glutathione synthetase ATP-binding domain-like"/>
    <property type="match status" value="1"/>
</dbReference>
<dbReference type="PROSITE" id="PS50975">
    <property type="entry name" value="ATP_GRASP"/>
    <property type="match status" value="1"/>
</dbReference>
<proteinExistence type="inferred from homology"/>
<feature type="chain" id="PRO_1000146952" description="Probable alpha-L-glutamate ligase">
    <location>
        <begin position="1"/>
        <end position="301"/>
    </location>
</feature>
<feature type="domain" description="ATP-grasp" evidence="1">
    <location>
        <begin position="104"/>
        <end position="287"/>
    </location>
</feature>
<feature type="binding site" evidence="1">
    <location>
        <position position="141"/>
    </location>
    <ligand>
        <name>ATP</name>
        <dbReference type="ChEBI" id="CHEBI:30616"/>
    </ligand>
</feature>
<feature type="binding site" evidence="1">
    <location>
        <begin position="178"/>
        <end position="179"/>
    </location>
    <ligand>
        <name>ATP</name>
        <dbReference type="ChEBI" id="CHEBI:30616"/>
    </ligand>
</feature>
<feature type="binding site" evidence="1">
    <location>
        <position position="187"/>
    </location>
    <ligand>
        <name>ATP</name>
        <dbReference type="ChEBI" id="CHEBI:30616"/>
    </ligand>
</feature>
<feature type="binding site" evidence="1">
    <location>
        <begin position="211"/>
        <end position="213"/>
    </location>
    <ligand>
        <name>ATP</name>
        <dbReference type="ChEBI" id="CHEBI:30616"/>
    </ligand>
</feature>
<feature type="binding site" evidence="1">
    <location>
        <position position="248"/>
    </location>
    <ligand>
        <name>Mg(2+)</name>
        <dbReference type="ChEBI" id="CHEBI:18420"/>
        <label>1</label>
    </ligand>
</feature>
<feature type="binding site" evidence="1">
    <location>
        <position position="248"/>
    </location>
    <ligand>
        <name>Mn(2+)</name>
        <dbReference type="ChEBI" id="CHEBI:29035"/>
        <label>1</label>
    </ligand>
</feature>
<feature type="binding site" evidence="1">
    <location>
        <position position="260"/>
    </location>
    <ligand>
        <name>Mg(2+)</name>
        <dbReference type="ChEBI" id="CHEBI:18420"/>
        <label>1</label>
    </ligand>
</feature>
<feature type="binding site" evidence="1">
    <location>
        <position position="260"/>
    </location>
    <ligand>
        <name>Mg(2+)</name>
        <dbReference type="ChEBI" id="CHEBI:18420"/>
        <label>2</label>
    </ligand>
</feature>
<feature type="binding site" evidence="1">
    <location>
        <position position="260"/>
    </location>
    <ligand>
        <name>Mn(2+)</name>
        <dbReference type="ChEBI" id="CHEBI:29035"/>
        <label>1</label>
    </ligand>
</feature>
<feature type="binding site" evidence="1">
    <location>
        <position position="260"/>
    </location>
    <ligand>
        <name>Mn(2+)</name>
        <dbReference type="ChEBI" id="CHEBI:29035"/>
        <label>2</label>
    </ligand>
</feature>
<feature type="binding site" evidence="1">
    <location>
        <position position="262"/>
    </location>
    <ligand>
        <name>Mg(2+)</name>
        <dbReference type="ChEBI" id="CHEBI:18420"/>
        <label>2</label>
    </ligand>
</feature>
<feature type="binding site" evidence="1">
    <location>
        <position position="262"/>
    </location>
    <ligand>
        <name>Mn(2+)</name>
        <dbReference type="ChEBI" id="CHEBI:29035"/>
        <label>2</label>
    </ligand>
</feature>
<accession>B1XQE7</accession>
<reference key="1">
    <citation type="submission" date="2008-02" db="EMBL/GenBank/DDBJ databases">
        <title>Complete sequence of Synechococcus sp. PCC 7002.</title>
        <authorList>
            <person name="Li T."/>
            <person name="Zhao J."/>
            <person name="Zhao C."/>
            <person name="Liu Z."/>
            <person name="Zhao F."/>
            <person name="Marquardt J."/>
            <person name="Nomura C.T."/>
            <person name="Persson S."/>
            <person name="Detter J.C."/>
            <person name="Richardson P.M."/>
            <person name="Lanz C."/>
            <person name="Schuster S.C."/>
            <person name="Wang J."/>
            <person name="Li S."/>
            <person name="Huang X."/>
            <person name="Cai T."/>
            <person name="Yu Z."/>
            <person name="Luo J."/>
            <person name="Zhao J."/>
            <person name="Bryant D.A."/>
        </authorList>
    </citation>
    <scope>NUCLEOTIDE SEQUENCE [LARGE SCALE GENOMIC DNA]</scope>
    <source>
        <strain>ATCC 27264 / PCC 7002 / PR-6</strain>
    </source>
</reference>
<name>RIMK_PICP2</name>
<evidence type="ECO:0000255" key="1">
    <source>
        <dbReference type="HAMAP-Rule" id="MF_01552"/>
    </source>
</evidence>
<protein>
    <recommendedName>
        <fullName evidence="1">Probable alpha-L-glutamate ligase</fullName>
        <ecNumber evidence="1">6.3.2.-</ecNumber>
    </recommendedName>
</protein>
<organism>
    <name type="scientific">Picosynechococcus sp. (strain ATCC 27264 / PCC 7002 / PR-6)</name>
    <name type="common">Agmenellum quadruplicatum</name>
    <dbReference type="NCBI Taxonomy" id="32049"/>
    <lineage>
        <taxon>Bacteria</taxon>
        <taxon>Bacillati</taxon>
        <taxon>Cyanobacteriota</taxon>
        <taxon>Cyanophyceae</taxon>
        <taxon>Oscillatoriophycideae</taxon>
        <taxon>Chroococcales</taxon>
        <taxon>Geminocystaceae</taxon>
        <taxon>Picosynechococcus</taxon>
    </lineage>
</organism>
<sequence>MKIAILSQDPKLYSTRRLREAAENRHHDVQVINFMRCYMNITSHQPFVIYQGQRLENFDAIIPRIGASATFYGTAVVRQFEVMGGFSANTSQAISRSRDKLRSLQILARKGIGLPVTGFAHATQDIDGLIETVGGAPVVIKLLEGTQGIGVVLAETHQAAKSVIEAFRGLDANILVQEYIAEAKGTDIRCFVVGEKVVAAMKRQGAEGEFRSNLHRGGKADKVRLTPEERSTAVRAAKAMGLRVAGVDLLRSNHGPLVMEINSSPGLEGIEKTTGVDVAGKIIEYLEKNAAPGKTTDRIQY</sequence>
<gene>
    <name evidence="1" type="primary">rimK</name>
    <name type="ordered locus">SYNPCC7002_A0684</name>
</gene>
<comment type="cofactor">
    <cofactor evidence="1">
        <name>Mg(2+)</name>
        <dbReference type="ChEBI" id="CHEBI:18420"/>
    </cofactor>
    <cofactor evidence="1">
        <name>Mn(2+)</name>
        <dbReference type="ChEBI" id="CHEBI:29035"/>
    </cofactor>
    <text evidence="1">Binds 2 magnesium or manganese ions per subunit.</text>
</comment>
<comment type="similarity">
    <text evidence="1">Belongs to the RimK family.</text>
</comment>
<keyword id="KW-0067">ATP-binding</keyword>
<keyword id="KW-0436">Ligase</keyword>
<keyword id="KW-0460">Magnesium</keyword>
<keyword id="KW-0464">Manganese</keyword>
<keyword id="KW-0479">Metal-binding</keyword>
<keyword id="KW-0547">Nucleotide-binding</keyword>
<keyword id="KW-0648">Protein biosynthesis</keyword>
<keyword id="KW-1185">Reference proteome</keyword>